<evidence type="ECO:0000255" key="1">
    <source>
        <dbReference type="HAMAP-Rule" id="MF_01632"/>
    </source>
</evidence>
<dbReference type="EC" id="4.1.3.40" evidence="1"/>
<dbReference type="EMBL" id="CP000510">
    <property type="protein sequence ID" value="ABM05151.1"/>
    <property type="molecule type" value="Genomic_DNA"/>
</dbReference>
<dbReference type="RefSeq" id="WP_011771703.1">
    <property type="nucleotide sequence ID" value="NC_008709.1"/>
</dbReference>
<dbReference type="SMR" id="A1T086"/>
<dbReference type="STRING" id="357804.Ping_3468"/>
<dbReference type="KEGG" id="pin:Ping_3468"/>
<dbReference type="eggNOG" id="COG3161">
    <property type="taxonomic scope" value="Bacteria"/>
</dbReference>
<dbReference type="HOGENOM" id="CLU_096824_2_0_6"/>
<dbReference type="OrthoDB" id="9789493at2"/>
<dbReference type="UniPathway" id="UPA00232"/>
<dbReference type="Proteomes" id="UP000000639">
    <property type="component" value="Chromosome"/>
</dbReference>
<dbReference type="GO" id="GO:0005829">
    <property type="term" value="C:cytosol"/>
    <property type="evidence" value="ECO:0007669"/>
    <property type="project" value="TreeGrafter"/>
</dbReference>
<dbReference type="GO" id="GO:0008813">
    <property type="term" value="F:chorismate lyase activity"/>
    <property type="evidence" value="ECO:0007669"/>
    <property type="project" value="UniProtKB-UniRule"/>
</dbReference>
<dbReference type="GO" id="GO:0042866">
    <property type="term" value="P:pyruvate biosynthetic process"/>
    <property type="evidence" value="ECO:0007669"/>
    <property type="project" value="UniProtKB-UniRule"/>
</dbReference>
<dbReference type="GO" id="GO:0006744">
    <property type="term" value="P:ubiquinone biosynthetic process"/>
    <property type="evidence" value="ECO:0007669"/>
    <property type="project" value="UniProtKB-UniRule"/>
</dbReference>
<dbReference type="Gene3D" id="3.40.1410.10">
    <property type="entry name" value="Chorismate lyase-like"/>
    <property type="match status" value="1"/>
</dbReference>
<dbReference type="HAMAP" id="MF_01632">
    <property type="entry name" value="UbiC"/>
    <property type="match status" value="1"/>
</dbReference>
<dbReference type="InterPro" id="IPR007440">
    <property type="entry name" value="Chorismate--pyruvate_lyase"/>
</dbReference>
<dbReference type="InterPro" id="IPR028978">
    <property type="entry name" value="Chorismate_lyase_/UTRA_dom_sf"/>
</dbReference>
<dbReference type="PANTHER" id="PTHR38683">
    <property type="entry name" value="CHORISMATE PYRUVATE-LYASE"/>
    <property type="match status" value="1"/>
</dbReference>
<dbReference type="PANTHER" id="PTHR38683:SF1">
    <property type="entry name" value="CHORISMATE PYRUVATE-LYASE"/>
    <property type="match status" value="1"/>
</dbReference>
<dbReference type="Pfam" id="PF04345">
    <property type="entry name" value="Chor_lyase"/>
    <property type="match status" value="1"/>
</dbReference>
<dbReference type="SUPFAM" id="SSF64288">
    <property type="entry name" value="Chorismate lyase-like"/>
    <property type="match status" value="1"/>
</dbReference>
<sequence>MDITITPLASSTLWSADITPTTCSENLLDWLLDQNSLTRKLQALSADFKVKVRQQVTLSHSKDLLSPYFSEENKVLVREVLLVCDNKPVVFAQTEIPFSTLTDQQAKLAEIGTDSLGTFLFQDPSMRRDKIEVAQFPVYSAVHQLCIDLNQEVDFPLWGRRSLFYVNNKPLLVSEVFLPASGIYLP</sequence>
<protein>
    <recommendedName>
        <fullName evidence="1">Probable chorismate pyruvate-lyase</fullName>
        <shortName evidence="1">CL</shortName>
        <shortName evidence="1">CPL</shortName>
        <ecNumber evidence="1">4.1.3.40</ecNumber>
    </recommendedName>
</protein>
<keyword id="KW-0963">Cytoplasm</keyword>
<keyword id="KW-0456">Lyase</keyword>
<keyword id="KW-0670">Pyruvate</keyword>
<keyword id="KW-1185">Reference proteome</keyword>
<keyword id="KW-0831">Ubiquinone biosynthesis</keyword>
<feature type="chain" id="PRO_0000292074" description="Probable chorismate pyruvate-lyase">
    <location>
        <begin position="1"/>
        <end position="186"/>
    </location>
</feature>
<feature type="binding site" evidence="1">
    <location>
        <position position="78"/>
    </location>
    <ligand>
        <name>substrate</name>
    </ligand>
</feature>
<feature type="binding site" evidence="1">
    <location>
        <position position="116"/>
    </location>
    <ligand>
        <name>substrate</name>
    </ligand>
</feature>
<feature type="binding site" evidence="1">
    <location>
        <position position="175"/>
    </location>
    <ligand>
        <name>substrate</name>
    </ligand>
</feature>
<accession>A1T086</accession>
<organism>
    <name type="scientific">Psychromonas ingrahamii (strain DSM 17664 / CCUG 51855 / 37)</name>
    <dbReference type="NCBI Taxonomy" id="357804"/>
    <lineage>
        <taxon>Bacteria</taxon>
        <taxon>Pseudomonadati</taxon>
        <taxon>Pseudomonadota</taxon>
        <taxon>Gammaproteobacteria</taxon>
        <taxon>Alteromonadales</taxon>
        <taxon>Psychromonadaceae</taxon>
        <taxon>Psychromonas</taxon>
    </lineage>
</organism>
<reference key="1">
    <citation type="journal article" date="2008" name="BMC Genomics">
        <title>Genomics of an extreme psychrophile, Psychromonas ingrahamii.</title>
        <authorList>
            <person name="Riley M."/>
            <person name="Staley J.T."/>
            <person name="Danchin A."/>
            <person name="Wang T.Z."/>
            <person name="Brettin T.S."/>
            <person name="Hauser L.J."/>
            <person name="Land M.L."/>
            <person name="Thompson L.S."/>
        </authorList>
    </citation>
    <scope>NUCLEOTIDE SEQUENCE [LARGE SCALE GENOMIC DNA]</scope>
    <source>
        <strain>DSM 17664 / CCUG 51855 / 37</strain>
    </source>
</reference>
<name>UBIC_PSYIN</name>
<proteinExistence type="inferred from homology"/>
<gene>
    <name evidence="1" type="primary">ubiC</name>
    <name type="ordered locus">Ping_3468</name>
</gene>
<comment type="function">
    <text evidence="1">Removes the pyruvyl group from chorismate, with concomitant aromatization of the ring, to provide 4-hydroxybenzoate (4HB) for the ubiquinone pathway.</text>
</comment>
<comment type="catalytic activity">
    <reaction evidence="1">
        <text>chorismate = 4-hydroxybenzoate + pyruvate</text>
        <dbReference type="Rhea" id="RHEA:16505"/>
        <dbReference type="ChEBI" id="CHEBI:15361"/>
        <dbReference type="ChEBI" id="CHEBI:17879"/>
        <dbReference type="ChEBI" id="CHEBI:29748"/>
        <dbReference type="EC" id="4.1.3.40"/>
    </reaction>
</comment>
<comment type="pathway">
    <text evidence="1">Cofactor biosynthesis; ubiquinone biosynthesis.</text>
</comment>
<comment type="subcellular location">
    <subcellularLocation>
        <location evidence="1">Cytoplasm</location>
    </subcellularLocation>
</comment>
<comment type="similarity">
    <text evidence="1">Belongs to the UbiC family.</text>
</comment>